<feature type="chain" id="PRO_0000389824" description="Acetyl-coenzyme A carboxylase carboxyl transferase subunit beta">
    <location>
        <begin position="1"/>
        <end position="301"/>
    </location>
</feature>
<feature type="domain" description="CoA carboxyltransferase N-terminal" evidence="2">
    <location>
        <begin position="25"/>
        <end position="294"/>
    </location>
</feature>
<organism>
    <name type="scientific">Rhizobium etli (strain ATCC 51251 / DSM 11541 / JCM 21823 / NBRC 15573 / CFN 42)</name>
    <dbReference type="NCBI Taxonomy" id="347834"/>
    <lineage>
        <taxon>Bacteria</taxon>
        <taxon>Pseudomonadati</taxon>
        <taxon>Pseudomonadota</taxon>
        <taxon>Alphaproteobacteria</taxon>
        <taxon>Hyphomicrobiales</taxon>
        <taxon>Rhizobiaceae</taxon>
        <taxon>Rhizobium/Agrobacterium group</taxon>
        <taxon>Rhizobium</taxon>
    </lineage>
</organism>
<name>ACCD_RHIEC</name>
<protein>
    <recommendedName>
        <fullName evidence="1">Acetyl-coenzyme A carboxylase carboxyl transferase subunit beta</fullName>
        <shortName evidence="1">ACCase subunit beta</shortName>
        <shortName evidence="1">Acetyl-CoA carboxylase carboxyltransferase subunit beta</shortName>
        <ecNumber evidence="1">2.1.3.15</ecNumber>
    </recommendedName>
</protein>
<proteinExistence type="inferred from homology"/>
<reference key="1">
    <citation type="journal article" date="2006" name="Proc. Natl. Acad. Sci. U.S.A.">
        <title>The partitioned Rhizobium etli genome: genetic and metabolic redundancy in seven interacting replicons.</title>
        <authorList>
            <person name="Gonzalez V."/>
            <person name="Santamaria R.I."/>
            <person name="Bustos P."/>
            <person name="Hernandez-Gonzalez I."/>
            <person name="Medrano-Soto A."/>
            <person name="Moreno-Hagelsieb G."/>
            <person name="Janga S.C."/>
            <person name="Ramirez M.A."/>
            <person name="Jimenez-Jacinto V."/>
            <person name="Collado-Vides J."/>
            <person name="Davila G."/>
        </authorList>
    </citation>
    <scope>NUCLEOTIDE SEQUENCE [LARGE SCALE GENOMIC DNA]</scope>
    <source>
        <strain>ATCC 51251 / DSM 11541 / JCM 21823 / NBRC 15573 / CFN 42</strain>
    </source>
</reference>
<keyword id="KW-0067">ATP-binding</keyword>
<keyword id="KW-0963">Cytoplasm</keyword>
<keyword id="KW-0275">Fatty acid biosynthesis</keyword>
<keyword id="KW-0276">Fatty acid metabolism</keyword>
<keyword id="KW-0444">Lipid biosynthesis</keyword>
<keyword id="KW-0443">Lipid metabolism</keyword>
<keyword id="KW-0547">Nucleotide-binding</keyword>
<keyword id="KW-1185">Reference proteome</keyword>
<keyword id="KW-0808">Transferase</keyword>
<comment type="function">
    <text evidence="1">Component of the acetyl coenzyme A carboxylase (ACC) complex. Biotin carboxylase (BC) catalyzes the carboxylation of biotin on its carrier protein (BCCP) and then the CO(2) group is transferred by the transcarboxylase to acetyl-CoA to form malonyl-CoA.</text>
</comment>
<comment type="catalytic activity">
    <reaction evidence="1">
        <text>N(6)-carboxybiotinyl-L-lysyl-[protein] + acetyl-CoA = N(6)-biotinyl-L-lysyl-[protein] + malonyl-CoA</text>
        <dbReference type="Rhea" id="RHEA:54728"/>
        <dbReference type="Rhea" id="RHEA-COMP:10505"/>
        <dbReference type="Rhea" id="RHEA-COMP:10506"/>
        <dbReference type="ChEBI" id="CHEBI:57288"/>
        <dbReference type="ChEBI" id="CHEBI:57384"/>
        <dbReference type="ChEBI" id="CHEBI:83144"/>
        <dbReference type="ChEBI" id="CHEBI:83145"/>
        <dbReference type="EC" id="2.1.3.15"/>
    </reaction>
</comment>
<comment type="pathway">
    <text evidence="1">Lipid metabolism; malonyl-CoA biosynthesis; malonyl-CoA from acetyl-CoA: step 1/1.</text>
</comment>
<comment type="subunit">
    <text evidence="1">Acetyl-CoA carboxylase is a heterohexamer composed of biotin carboxyl carrier protein (AccB), biotin carboxylase (AccC) and two subunits each of ACCase subunit alpha (AccA) and ACCase subunit beta (AccD).</text>
</comment>
<comment type="subcellular location">
    <subcellularLocation>
        <location evidence="1">Cytoplasm</location>
    </subcellularLocation>
</comment>
<comment type="similarity">
    <text evidence="1">Belongs to the AccD/PCCB family.</text>
</comment>
<sequence length="301" mass="33114">MNWITNYVRPRINSMLGRREVPENLWIKCPETGEMVFHKDLESNKWVIPASGYHMKMPAKARLADLFDNGEYESLPQPKVAQDPLKFRDSKKYSDRLRDSRLKTEQEDTILAGLGKVQGLKLVAVVHEFNFIGGSLGIAAGEAIVKAFERATSEKCPLVMFPASGGARMQEGILSLMQLPRTTVAVDLLKESGQPYVVVLTNPTTGGVTASYAMLGDIHLAEPGAEIGFAGKRVIEQTLREKLPEGFQTSEYLLEHGMVDMVVKRHDIPETLARVLKILTKKPVSAANDVTRGAIALAASA</sequence>
<gene>
    <name evidence="1" type="primary">accD</name>
    <name type="ordered locus">RHE_CH00023</name>
</gene>
<evidence type="ECO:0000255" key="1">
    <source>
        <dbReference type="HAMAP-Rule" id="MF_01395"/>
    </source>
</evidence>
<evidence type="ECO:0000255" key="2">
    <source>
        <dbReference type="PROSITE-ProRule" id="PRU01136"/>
    </source>
</evidence>
<accession>Q2KE80</accession>
<dbReference type="EC" id="2.1.3.15" evidence="1"/>
<dbReference type="EMBL" id="CP000133">
    <property type="protein sequence ID" value="ABC88856.1"/>
    <property type="molecule type" value="Genomic_DNA"/>
</dbReference>
<dbReference type="RefSeq" id="WP_011423428.1">
    <property type="nucleotide sequence ID" value="NC_007761.1"/>
</dbReference>
<dbReference type="SMR" id="Q2KE80"/>
<dbReference type="KEGG" id="ret:RHE_CH00023"/>
<dbReference type="eggNOG" id="COG0777">
    <property type="taxonomic scope" value="Bacteria"/>
</dbReference>
<dbReference type="HOGENOM" id="CLU_015486_1_0_5"/>
<dbReference type="OrthoDB" id="9772975at2"/>
<dbReference type="UniPathway" id="UPA00655">
    <property type="reaction ID" value="UER00711"/>
</dbReference>
<dbReference type="Proteomes" id="UP000001936">
    <property type="component" value="Chromosome"/>
</dbReference>
<dbReference type="GO" id="GO:0009329">
    <property type="term" value="C:acetate CoA-transferase complex"/>
    <property type="evidence" value="ECO:0007669"/>
    <property type="project" value="TreeGrafter"/>
</dbReference>
<dbReference type="GO" id="GO:0003989">
    <property type="term" value="F:acetyl-CoA carboxylase activity"/>
    <property type="evidence" value="ECO:0007669"/>
    <property type="project" value="InterPro"/>
</dbReference>
<dbReference type="GO" id="GO:0005524">
    <property type="term" value="F:ATP binding"/>
    <property type="evidence" value="ECO:0007669"/>
    <property type="project" value="UniProtKB-KW"/>
</dbReference>
<dbReference type="GO" id="GO:0016743">
    <property type="term" value="F:carboxyl- or carbamoyltransferase activity"/>
    <property type="evidence" value="ECO:0007669"/>
    <property type="project" value="UniProtKB-UniRule"/>
</dbReference>
<dbReference type="GO" id="GO:0006633">
    <property type="term" value="P:fatty acid biosynthetic process"/>
    <property type="evidence" value="ECO:0007669"/>
    <property type="project" value="UniProtKB-KW"/>
</dbReference>
<dbReference type="GO" id="GO:2001295">
    <property type="term" value="P:malonyl-CoA biosynthetic process"/>
    <property type="evidence" value="ECO:0007669"/>
    <property type="project" value="UniProtKB-UniRule"/>
</dbReference>
<dbReference type="Gene3D" id="3.90.226.10">
    <property type="entry name" value="2-enoyl-CoA Hydratase, Chain A, domain 1"/>
    <property type="match status" value="1"/>
</dbReference>
<dbReference type="HAMAP" id="MF_01395">
    <property type="entry name" value="AcetylCoA_CT_beta"/>
    <property type="match status" value="1"/>
</dbReference>
<dbReference type="InterPro" id="IPR034733">
    <property type="entry name" value="AcCoA_carboxyl_beta"/>
</dbReference>
<dbReference type="InterPro" id="IPR000438">
    <property type="entry name" value="Acetyl_CoA_COase_Trfase_b_su"/>
</dbReference>
<dbReference type="InterPro" id="IPR029045">
    <property type="entry name" value="ClpP/crotonase-like_dom_sf"/>
</dbReference>
<dbReference type="InterPro" id="IPR011762">
    <property type="entry name" value="COA_CT_N"/>
</dbReference>
<dbReference type="NCBIfam" id="TIGR00515">
    <property type="entry name" value="accD"/>
    <property type="match status" value="1"/>
</dbReference>
<dbReference type="PANTHER" id="PTHR42995">
    <property type="entry name" value="ACETYL-COENZYME A CARBOXYLASE CARBOXYL TRANSFERASE SUBUNIT BETA, CHLOROPLASTIC"/>
    <property type="match status" value="1"/>
</dbReference>
<dbReference type="PANTHER" id="PTHR42995:SF5">
    <property type="entry name" value="ACETYL-COENZYME A CARBOXYLASE CARBOXYL TRANSFERASE SUBUNIT BETA, CHLOROPLASTIC"/>
    <property type="match status" value="1"/>
</dbReference>
<dbReference type="Pfam" id="PF01039">
    <property type="entry name" value="Carboxyl_trans"/>
    <property type="match status" value="1"/>
</dbReference>
<dbReference type="PRINTS" id="PR01070">
    <property type="entry name" value="ACCCTRFRASEB"/>
</dbReference>
<dbReference type="SUPFAM" id="SSF52096">
    <property type="entry name" value="ClpP/crotonase"/>
    <property type="match status" value="1"/>
</dbReference>
<dbReference type="PROSITE" id="PS50980">
    <property type="entry name" value="COA_CT_NTER"/>
    <property type="match status" value="1"/>
</dbReference>